<reference key="1">
    <citation type="journal article" date="2008" name="J. Bacteriol.">
        <title>The complete genome sequence of Escherichia coli DH10B: insights into the biology of a laboratory workhorse.</title>
        <authorList>
            <person name="Durfee T."/>
            <person name="Nelson R."/>
            <person name="Baldwin S."/>
            <person name="Plunkett G. III"/>
            <person name="Burland V."/>
            <person name="Mau B."/>
            <person name="Petrosino J.F."/>
            <person name="Qin X."/>
            <person name="Muzny D.M."/>
            <person name="Ayele M."/>
            <person name="Gibbs R.A."/>
            <person name="Csorgo B."/>
            <person name="Posfai G."/>
            <person name="Weinstock G.M."/>
            <person name="Blattner F.R."/>
        </authorList>
    </citation>
    <scope>NUCLEOTIDE SEQUENCE [LARGE SCALE GENOMIC DNA]</scope>
    <source>
        <strain>K12 / DH10B</strain>
    </source>
</reference>
<accession>B1XFK5</accession>
<comment type="catalytic activity">
    <reaction evidence="1">
        <text>(2R)-2-phosphoglycerate = (2R)-3-phosphoglycerate</text>
        <dbReference type="Rhea" id="RHEA:15901"/>
        <dbReference type="ChEBI" id="CHEBI:58272"/>
        <dbReference type="ChEBI" id="CHEBI:58289"/>
    </reaction>
</comment>
<comment type="pathway">
    <text evidence="1">Carbohydrate degradation; glycolysis; pyruvate from D-glyceraldehyde 3-phosphate: step 3/5.</text>
</comment>
<comment type="similarity">
    <text evidence="1">Belongs to the phosphoglycerate mutase family. GpmB subfamily.</text>
</comment>
<dbReference type="EC" id="5.4.2.-" evidence="1"/>
<dbReference type="EMBL" id="CP000948">
    <property type="protein sequence ID" value="ACB05323.1"/>
    <property type="molecule type" value="Genomic_DNA"/>
</dbReference>
<dbReference type="RefSeq" id="WP_000942344.1">
    <property type="nucleotide sequence ID" value="NC_010473.1"/>
</dbReference>
<dbReference type="SMR" id="B1XFK5"/>
<dbReference type="GeneID" id="93777450"/>
<dbReference type="KEGG" id="ecd:ECDH10B_4553"/>
<dbReference type="HOGENOM" id="CLU_033323_9_5_6"/>
<dbReference type="UniPathway" id="UPA00109">
    <property type="reaction ID" value="UER00186"/>
</dbReference>
<dbReference type="GO" id="GO:0005737">
    <property type="term" value="C:cytoplasm"/>
    <property type="evidence" value="ECO:0007669"/>
    <property type="project" value="TreeGrafter"/>
</dbReference>
<dbReference type="GO" id="GO:0016791">
    <property type="term" value="F:phosphatase activity"/>
    <property type="evidence" value="ECO:0007669"/>
    <property type="project" value="TreeGrafter"/>
</dbReference>
<dbReference type="GO" id="GO:0004619">
    <property type="term" value="F:phosphoglycerate mutase activity"/>
    <property type="evidence" value="ECO:0007669"/>
    <property type="project" value="UniProtKB-UniRule"/>
</dbReference>
<dbReference type="GO" id="GO:0006096">
    <property type="term" value="P:glycolytic process"/>
    <property type="evidence" value="ECO:0007669"/>
    <property type="project" value="UniProtKB-UniRule"/>
</dbReference>
<dbReference type="CDD" id="cd07067">
    <property type="entry name" value="HP_PGM_like"/>
    <property type="match status" value="1"/>
</dbReference>
<dbReference type="Gene3D" id="3.40.50.1240">
    <property type="entry name" value="Phosphoglycerate mutase-like"/>
    <property type="match status" value="1"/>
</dbReference>
<dbReference type="HAMAP" id="MF_01040">
    <property type="entry name" value="PGAM_GpmB"/>
    <property type="match status" value="1"/>
</dbReference>
<dbReference type="InterPro" id="IPR013078">
    <property type="entry name" value="His_Pase_superF_clade-1"/>
</dbReference>
<dbReference type="InterPro" id="IPR029033">
    <property type="entry name" value="His_PPase_superfam"/>
</dbReference>
<dbReference type="InterPro" id="IPR001345">
    <property type="entry name" value="PG/BPGM_mutase_AS"/>
</dbReference>
<dbReference type="InterPro" id="IPR050275">
    <property type="entry name" value="PGM_Phosphatase"/>
</dbReference>
<dbReference type="InterPro" id="IPR023086">
    <property type="entry name" value="Phosphoglycerate_mutase_GpmB"/>
</dbReference>
<dbReference type="NCBIfam" id="NF002901">
    <property type="entry name" value="PRK03482.1"/>
    <property type="match status" value="1"/>
</dbReference>
<dbReference type="PANTHER" id="PTHR48100">
    <property type="entry name" value="BROAD-SPECIFICITY PHOSPHATASE YOR283W-RELATED"/>
    <property type="match status" value="1"/>
</dbReference>
<dbReference type="PANTHER" id="PTHR48100:SF1">
    <property type="entry name" value="HISTIDINE PHOSPHATASE FAMILY PROTEIN-RELATED"/>
    <property type="match status" value="1"/>
</dbReference>
<dbReference type="Pfam" id="PF00300">
    <property type="entry name" value="His_Phos_1"/>
    <property type="match status" value="1"/>
</dbReference>
<dbReference type="SMART" id="SM00855">
    <property type="entry name" value="PGAM"/>
    <property type="match status" value="1"/>
</dbReference>
<dbReference type="SUPFAM" id="SSF53254">
    <property type="entry name" value="Phosphoglycerate mutase-like"/>
    <property type="match status" value="1"/>
</dbReference>
<dbReference type="PROSITE" id="PS00175">
    <property type="entry name" value="PG_MUTASE"/>
    <property type="match status" value="1"/>
</dbReference>
<protein>
    <recommendedName>
        <fullName evidence="1">Probable phosphoglycerate mutase GpmB</fullName>
        <ecNumber evidence="1">5.4.2.-</ecNumber>
    </recommendedName>
    <alternativeName>
        <fullName evidence="1">PGAM</fullName>
    </alternativeName>
    <alternativeName>
        <fullName evidence="1">Phosphoglyceromutase</fullName>
    </alternativeName>
</protein>
<proteinExistence type="inferred from homology"/>
<keyword id="KW-0324">Glycolysis</keyword>
<keyword id="KW-0413">Isomerase</keyword>
<feature type="chain" id="PRO_1000136003" description="Probable phosphoglycerate mutase GpmB">
    <location>
        <begin position="1"/>
        <end position="215"/>
    </location>
</feature>
<feature type="active site" description="Tele-phosphohistidine intermediate" evidence="1">
    <location>
        <position position="9"/>
    </location>
</feature>
<feature type="active site" description="Proton donor/acceptor" evidence="1">
    <location>
        <position position="82"/>
    </location>
</feature>
<feature type="binding site" evidence="1">
    <location>
        <begin position="8"/>
        <end position="15"/>
    </location>
    <ligand>
        <name>substrate</name>
    </ligand>
</feature>
<feature type="binding site" evidence="1">
    <location>
        <begin position="21"/>
        <end position="22"/>
    </location>
    <ligand>
        <name>substrate</name>
    </ligand>
</feature>
<feature type="binding site" evidence="1">
    <location>
        <position position="58"/>
    </location>
    <ligand>
        <name>substrate</name>
    </ligand>
</feature>
<feature type="binding site" evidence="1">
    <location>
        <position position="60"/>
    </location>
    <ligand>
        <name>substrate</name>
    </ligand>
</feature>
<feature type="binding site" evidence="1">
    <location>
        <begin position="82"/>
        <end position="85"/>
    </location>
    <ligand>
        <name>substrate</name>
    </ligand>
</feature>
<feature type="binding site" evidence="1">
    <location>
        <begin position="104"/>
        <end position="105"/>
    </location>
    <ligand>
        <name>substrate</name>
    </ligand>
</feature>
<feature type="binding site" evidence="1">
    <location>
        <begin position="151"/>
        <end position="152"/>
    </location>
    <ligand>
        <name>substrate</name>
    </ligand>
</feature>
<feature type="site" description="Transition state stabilizer" evidence="1">
    <location>
        <position position="150"/>
    </location>
</feature>
<sequence>MLQVYLVRHGETQWNAERRIQGQSDSPLTAKGEQQAMQVATRAKELGITHIISSDLGRTRRTAEIIAQACGCDIIFDSRLRELNMGVLEKRHIDSLTEEEENWRRQLVNGTVDGRIPEGESMQELSDRVNAALESCRDLPQGSRPLLVSHGIALGCLVSTILGLPAWAERRLRLRNCSISRVDYQESLWLASGWVVETAGDISHLDAPALDELQR</sequence>
<evidence type="ECO:0000255" key="1">
    <source>
        <dbReference type="HAMAP-Rule" id="MF_01040"/>
    </source>
</evidence>
<organism>
    <name type="scientific">Escherichia coli (strain K12 / DH10B)</name>
    <dbReference type="NCBI Taxonomy" id="316385"/>
    <lineage>
        <taxon>Bacteria</taxon>
        <taxon>Pseudomonadati</taxon>
        <taxon>Pseudomonadota</taxon>
        <taxon>Gammaproteobacteria</taxon>
        <taxon>Enterobacterales</taxon>
        <taxon>Enterobacteriaceae</taxon>
        <taxon>Escherichia</taxon>
    </lineage>
</organism>
<name>GPMB_ECODH</name>
<gene>
    <name evidence="1" type="primary">gpmB</name>
    <name type="ordered locus">ECDH10B_4553</name>
</gene>